<protein>
    <recommendedName>
        <fullName evidence="1">Recombination protein RecR</fullName>
    </recommendedName>
</protein>
<evidence type="ECO:0000255" key="1">
    <source>
        <dbReference type="HAMAP-Rule" id="MF_00017"/>
    </source>
</evidence>
<organism>
    <name type="scientific">Psychromonas ingrahamii (strain DSM 17664 / CCUG 51855 / 37)</name>
    <dbReference type="NCBI Taxonomy" id="357804"/>
    <lineage>
        <taxon>Bacteria</taxon>
        <taxon>Pseudomonadati</taxon>
        <taxon>Pseudomonadota</taxon>
        <taxon>Gammaproteobacteria</taxon>
        <taxon>Alteromonadales</taxon>
        <taxon>Psychromonadaceae</taxon>
        <taxon>Psychromonas</taxon>
    </lineage>
</organism>
<feature type="chain" id="PRO_0000322937" description="Recombination protein RecR">
    <location>
        <begin position="1"/>
        <end position="199"/>
    </location>
</feature>
<feature type="domain" description="Toprim" evidence="1">
    <location>
        <begin position="81"/>
        <end position="176"/>
    </location>
</feature>
<feature type="zinc finger region" description="C4-type" evidence="1">
    <location>
        <begin position="57"/>
        <end position="72"/>
    </location>
</feature>
<comment type="function">
    <text evidence="1">May play a role in DNA repair. It seems to be involved in an RecBC-independent recombinational process of DNA repair. It may act with RecF and RecO.</text>
</comment>
<comment type="similarity">
    <text evidence="1">Belongs to the RecR family.</text>
</comment>
<reference key="1">
    <citation type="journal article" date="2008" name="BMC Genomics">
        <title>Genomics of an extreme psychrophile, Psychromonas ingrahamii.</title>
        <authorList>
            <person name="Riley M."/>
            <person name="Staley J.T."/>
            <person name="Danchin A."/>
            <person name="Wang T.Z."/>
            <person name="Brettin T.S."/>
            <person name="Hauser L.J."/>
            <person name="Land M.L."/>
            <person name="Thompson L.S."/>
        </authorList>
    </citation>
    <scope>NUCLEOTIDE SEQUENCE [LARGE SCALE GENOMIC DNA]</scope>
    <source>
        <strain>DSM 17664 / CCUG 51855 / 37</strain>
    </source>
</reference>
<gene>
    <name evidence="1" type="primary">recR</name>
    <name type="ordered locus">Ping_2272</name>
</gene>
<accession>A1SWZ8</accession>
<keyword id="KW-0227">DNA damage</keyword>
<keyword id="KW-0233">DNA recombination</keyword>
<keyword id="KW-0234">DNA repair</keyword>
<keyword id="KW-0479">Metal-binding</keyword>
<keyword id="KW-1185">Reference proteome</keyword>
<keyword id="KW-0862">Zinc</keyword>
<keyword id="KW-0863">Zinc-finger</keyword>
<sequence>MSSSSLLEDLMQALQCLPSVGPKSAQRMVYHLLDKNRKGALNLSSLLERAVNEIGHCQQCRTFTEQNLCAICDNDKRNKNGMICVVEMPVDVLAIEQTALFSGTYFVLMGHLSPLDGVGPEQLGLNLLDKQLSSGQHSEVILATNPTVEGEATAYYIAEMAKRYAIKVSRIAHGVPVGGELEYVDSTTLSHSFSGRSVF</sequence>
<dbReference type="EMBL" id="CP000510">
    <property type="protein sequence ID" value="ABM04013.1"/>
    <property type="molecule type" value="Genomic_DNA"/>
</dbReference>
<dbReference type="RefSeq" id="WP_011770573.1">
    <property type="nucleotide sequence ID" value="NC_008709.1"/>
</dbReference>
<dbReference type="SMR" id="A1SWZ8"/>
<dbReference type="STRING" id="357804.Ping_2272"/>
<dbReference type="KEGG" id="pin:Ping_2272"/>
<dbReference type="eggNOG" id="COG0353">
    <property type="taxonomic scope" value="Bacteria"/>
</dbReference>
<dbReference type="HOGENOM" id="CLU_060739_1_2_6"/>
<dbReference type="OrthoDB" id="9802672at2"/>
<dbReference type="Proteomes" id="UP000000639">
    <property type="component" value="Chromosome"/>
</dbReference>
<dbReference type="GO" id="GO:0003677">
    <property type="term" value="F:DNA binding"/>
    <property type="evidence" value="ECO:0007669"/>
    <property type="project" value="UniProtKB-UniRule"/>
</dbReference>
<dbReference type="GO" id="GO:0008270">
    <property type="term" value="F:zinc ion binding"/>
    <property type="evidence" value="ECO:0007669"/>
    <property type="project" value="UniProtKB-KW"/>
</dbReference>
<dbReference type="GO" id="GO:0006310">
    <property type="term" value="P:DNA recombination"/>
    <property type="evidence" value="ECO:0007669"/>
    <property type="project" value="UniProtKB-UniRule"/>
</dbReference>
<dbReference type="GO" id="GO:0006281">
    <property type="term" value="P:DNA repair"/>
    <property type="evidence" value="ECO:0007669"/>
    <property type="project" value="UniProtKB-UniRule"/>
</dbReference>
<dbReference type="CDD" id="cd01025">
    <property type="entry name" value="TOPRIM_recR"/>
    <property type="match status" value="1"/>
</dbReference>
<dbReference type="FunFam" id="3.40.1360.10:FF:000001">
    <property type="entry name" value="Recombination protein RecR"/>
    <property type="match status" value="1"/>
</dbReference>
<dbReference type="Gene3D" id="3.40.1360.10">
    <property type="match status" value="1"/>
</dbReference>
<dbReference type="Gene3D" id="6.10.250.240">
    <property type="match status" value="1"/>
</dbReference>
<dbReference type="Gene3D" id="1.10.8.420">
    <property type="entry name" value="RecR Domain 1"/>
    <property type="match status" value="1"/>
</dbReference>
<dbReference type="HAMAP" id="MF_00017">
    <property type="entry name" value="RecR"/>
    <property type="match status" value="1"/>
</dbReference>
<dbReference type="InterPro" id="IPR000093">
    <property type="entry name" value="DNA_Rcmb_RecR"/>
</dbReference>
<dbReference type="InterPro" id="IPR023627">
    <property type="entry name" value="Rcmb_RecR"/>
</dbReference>
<dbReference type="InterPro" id="IPR015967">
    <property type="entry name" value="Rcmb_RecR_Znf"/>
</dbReference>
<dbReference type="InterPro" id="IPR006171">
    <property type="entry name" value="TOPRIM_dom"/>
</dbReference>
<dbReference type="InterPro" id="IPR034137">
    <property type="entry name" value="TOPRIM_RecR"/>
</dbReference>
<dbReference type="NCBIfam" id="TIGR00615">
    <property type="entry name" value="recR"/>
    <property type="match status" value="1"/>
</dbReference>
<dbReference type="PANTHER" id="PTHR30446">
    <property type="entry name" value="RECOMBINATION PROTEIN RECR"/>
    <property type="match status" value="1"/>
</dbReference>
<dbReference type="PANTHER" id="PTHR30446:SF0">
    <property type="entry name" value="RECOMBINATION PROTEIN RECR"/>
    <property type="match status" value="1"/>
</dbReference>
<dbReference type="Pfam" id="PF21175">
    <property type="entry name" value="RecR_C"/>
    <property type="match status" value="1"/>
</dbReference>
<dbReference type="Pfam" id="PF21176">
    <property type="entry name" value="RecR_HhH"/>
    <property type="match status" value="1"/>
</dbReference>
<dbReference type="Pfam" id="PF02132">
    <property type="entry name" value="RecR_ZnF"/>
    <property type="match status" value="1"/>
</dbReference>
<dbReference type="Pfam" id="PF13662">
    <property type="entry name" value="Toprim_4"/>
    <property type="match status" value="1"/>
</dbReference>
<dbReference type="SMART" id="SM00493">
    <property type="entry name" value="TOPRIM"/>
    <property type="match status" value="1"/>
</dbReference>
<dbReference type="SUPFAM" id="SSF111304">
    <property type="entry name" value="Recombination protein RecR"/>
    <property type="match status" value="1"/>
</dbReference>
<dbReference type="PROSITE" id="PS01300">
    <property type="entry name" value="RECR"/>
    <property type="match status" value="1"/>
</dbReference>
<dbReference type="PROSITE" id="PS50880">
    <property type="entry name" value="TOPRIM"/>
    <property type="match status" value="1"/>
</dbReference>
<name>RECR_PSYIN</name>
<proteinExistence type="inferred from homology"/>